<organism>
    <name type="scientific">Homo sapiens</name>
    <name type="common">Human</name>
    <dbReference type="NCBI Taxonomy" id="9606"/>
    <lineage>
        <taxon>Eukaryota</taxon>
        <taxon>Metazoa</taxon>
        <taxon>Chordata</taxon>
        <taxon>Craniata</taxon>
        <taxon>Vertebrata</taxon>
        <taxon>Euteleostomi</taxon>
        <taxon>Mammalia</taxon>
        <taxon>Eutheria</taxon>
        <taxon>Euarchontoglires</taxon>
        <taxon>Primates</taxon>
        <taxon>Haplorrhini</taxon>
        <taxon>Catarrhini</taxon>
        <taxon>Hominidae</taxon>
        <taxon>Homo</taxon>
    </lineage>
</organism>
<evidence type="ECO:0000250" key="1"/>
<evidence type="ECO:0000255" key="2"/>
<evidence type="ECO:0000255" key="3">
    <source>
        <dbReference type="PROSITE-ProRule" id="PRU00114"/>
    </source>
</evidence>
<evidence type="ECO:0000256" key="4">
    <source>
        <dbReference type="SAM" id="MobiDB-lite"/>
    </source>
</evidence>
<evidence type="ECO:0000269" key="5">
    <source>
    </source>
</evidence>
<evidence type="ECO:0000303" key="6">
    <source>
    </source>
</evidence>
<evidence type="ECO:0000305" key="7"/>
<reference key="1">
    <citation type="journal article" date="2004" name="Genomics">
        <title>The LRIG gene family has three vertebrate paralogs widely expressed in human and mouse tissues and a homolog in Ascidiacea.</title>
        <authorList>
            <person name="Guo D."/>
            <person name="Holmlund C."/>
            <person name="Henriksson R."/>
            <person name="Hedman H."/>
        </authorList>
    </citation>
    <scope>NUCLEOTIDE SEQUENCE [MRNA] (ISOFORM 1)</scope>
    <scope>TISSUE SPECIFICITY</scope>
</reference>
<reference key="2">
    <citation type="journal article" date="2003" name="Genome Res.">
        <title>The secreted protein discovery initiative (SPDI), a large-scale effort to identify novel human secreted and transmembrane proteins: a bioinformatics assessment.</title>
        <authorList>
            <person name="Clark H.F."/>
            <person name="Gurney A.L."/>
            <person name="Abaya E."/>
            <person name="Baker K."/>
            <person name="Baldwin D.T."/>
            <person name="Brush J."/>
            <person name="Chen J."/>
            <person name="Chow B."/>
            <person name="Chui C."/>
            <person name="Crowley C."/>
            <person name="Currell B."/>
            <person name="Deuel B."/>
            <person name="Dowd P."/>
            <person name="Eaton D."/>
            <person name="Foster J.S."/>
            <person name="Grimaldi C."/>
            <person name="Gu Q."/>
            <person name="Hass P.E."/>
            <person name="Heldens S."/>
            <person name="Huang A."/>
            <person name="Kim H.S."/>
            <person name="Klimowski L."/>
            <person name="Jin Y."/>
            <person name="Johnson S."/>
            <person name="Lee J."/>
            <person name="Lewis L."/>
            <person name="Liao D."/>
            <person name="Mark M.R."/>
            <person name="Robbie E."/>
            <person name="Sanchez C."/>
            <person name="Schoenfeld J."/>
            <person name="Seshagiri S."/>
            <person name="Simmons L."/>
            <person name="Singh J."/>
            <person name="Smith V."/>
            <person name="Stinson J."/>
            <person name="Vagts A."/>
            <person name="Vandlen R.L."/>
            <person name="Watanabe C."/>
            <person name="Wieand D."/>
            <person name="Woods K."/>
            <person name="Xie M.-H."/>
            <person name="Yansura D.G."/>
            <person name="Yi S."/>
            <person name="Yu G."/>
            <person name="Yuan J."/>
            <person name="Zhang M."/>
            <person name="Zhang Z."/>
            <person name="Goddard A.D."/>
            <person name="Wood W.I."/>
            <person name="Godowski P.J."/>
            <person name="Gray A.M."/>
        </authorList>
    </citation>
    <scope>NUCLEOTIDE SEQUENCE [LARGE SCALE MRNA] (ISOFORMS 1 AND 2)</scope>
</reference>
<reference key="3">
    <citation type="journal article" date="2004" name="Nat. Genet.">
        <title>Complete sequencing and characterization of 21,243 full-length human cDNAs.</title>
        <authorList>
            <person name="Ota T."/>
            <person name="Suzuki Y."/>
            <person name="Nishikawa T."/>
            <person name="Otsuki T."/>
            <person name="Sugiyama T."/>
            <person name="Irie R."/>
            <person name="Wakamatsu A."/>
            <person name="Hayashi K."/>
            <person name="Sato H."/>
            <person name="Nagai K."/>
            <person name="Kimura K."/>
            <person name="Makita H."/>
            <person name="Sekine M."/>
            <person name="Obayashi M."/>
            <person name="Nishi T."/>
            <person name="Shibahara T."/>
            <person name="Tanaka T."/>
            <person name="Ishii S."/>
            <person name="Yamamoto J."/>
            <person name="Saito K."/>
            <person name="Kawai Y."/>
            <person name="Isono Y."/>
            <person name="Nakamura Y."/>
            <person name="Nagahari K."/>
            <person name="Murakami K."/>
            <person name="Yasuda T."/>
            <person name="Iwayanagi T."/>
            <person name="Wagatsuma M."/>
            <person name="Shiratori A."/>
            <person name="Sudo H."/>
            <person name="Hosoiri T."/>
            <person name="Kaku Y."/>
            <person name="Kodaira H."/>
            <person name="Kondo H."/>
            <person name="Sugawara M."/>
            <person name="Takahashi M."/>
            <person name="Kanda K."/>
            <person name="Yokoi T."/>
            <person name="Furuya T."/>
            <person name="Kikkawa E."/>
            <person name="Omura Y."/>
            <person name="Abe K."/>
            <person name="Kamihara K."/>
            <person name="Katsuta N."/>
            <person name="Sato K."/>
            <person name="Tanikawa M."/>
            <person name="Yamazaki M."/>
            <person name="Ninomiya K."/>
            <person name="Ishibashi T."/>
            <person name="Yamashita H."/>
            <person name="Murakawa K."/>
            <person name="Fujimori K."/>
            <person name="Tanai H."/>
            <person name="Kimata M."/>
            <person name="Watanabe M."/>
            <person name="Hiraoka S."/>
            <person name="Chiba Y."/>
            <person name="Ishida S."/>
            <person name="Ono Y."/>
            <person name="Takiguchi S."/>
            <person name="Watanabe S."/>
            <person name="Yosida M."/>
            <person name="Hotuta T."/>
            <person name="Kusano J."/>
            <person name="Kanehori K."/>
            <person name="Takahashi-Fujii A."/>
            <person name="Hara H."/>
            <person name="Tanase T.-O."/>
            <person name="Nomura Y."/>
            <person name="Togiya S."/>
            <person name="Komai F."/>
            <person name="Hara R."/>
            <person name="Takeuchi K."/>
            <person name="Arita M."/>
            <person name="Imose N."/>
            <person name="Musashino K."/>
            <person name="Yuuki H."/>
            <person name="Oshima A."/>
            <person name="Sasaki N."/>
            <person name="Aotsuka S."/>
            <person name="Yoshikawa Y."/>
            <person name="Matsunawa H."/>
            <person name="Ichihara T."/>
            <person name="Shiohata N."/>
            <person name="Sano S."/>
            <person name="Moriya S."/>
            <person name="Momiyama H."/>
            <person name="Satoh N."/>
            <person name="Takami S."/>
            <person name="Terashima Y."/>
            <person name="Suzuki O."/>
            <person name="Nakagawa S."/>
            <person name="Senoh A."/>
            <person name="Mizoguchi H."/>
            <person name="Goto Y."/>
            <person name="Shimizu F."/>
            <person name="Wakebe H."/>
            <person name="Hishigaki H."/>
            <person name="Watanabe T."/>
            <person name="Sugiyama A."/>
            <person name="Takemoto M."/>
            <person name="Kawakami B."/>
            <person name="Yamazaki M."/>
            <person name="Watanabe K."/>
            <person name="Kumagai A."/>
            <person name="Itakura S."/>
            <person name="Fukuzumi Y."/>
            <person name="Fujimori Y."/>
            <person name="Komiyama M."/>
            <person name="Tashiro H."/>
            <person name="Tanigami A."/>
            <person name="Fujiwara T."/>
            <person name="Ono T."/>
            <person name="Yamada K."/>
            <person name="Fujii Y."/>
            <person name="Ozaki K."/>
            <person name="Hirao M."/>
            <person name="Ohmori Y."/>
            <person name="Kawabata A."/>
            <person name="Hikiji T."/>
            <person name="Kobatake N."/>
            <person name="Inagaki H."/>
            <person name="Ikema Y."/>
            <person name="Okamoto S."/>
            <person name="Okitani R."/>
            <person name="Kawakami T."/>
            <person name="Noguchi S."/>
            <person name="Itoh T."/>
            <person name="Shigeta K."/>
            <person name="Senba T."/>
            <person name="Matsumura K."/>
            <person name="Nakajima Y."/>
            <person name="Mizuno T."/>
            <person name="Morinaga M."/>
            <person name="Sasaki M."/>
            <person name="Togashi T."/>
            <person name="Oyama M."/>
            <person name="Hata H."/>
            <person name="Watanabe M."/>
            <person name="Komatsu T."/>
            <person name="Mizushima-Sugano J."/>
            <person name="Satoh T."/>
            <person name="Shirai Y."/>
            <person name="Takahashi Y."/>
            <person name="Nakagawa K."/>
            <person name="Okumura K."/>
            <person name="Nagase T."/>
            <person name="Nomura N."/>
            <person name="Kikuchi H."/>
            <person name="Masuho Y."/>
            <person name="Yamashita R."/>
            <person name="Nakai K."/>
            <person name="Yada T."/>
            <person name="Nakamura Y."/>
            <person name="Ohara O."/>
            <person name="Isogai T."/>
            <person name="Sugano S."/>
        </authorList>
    </citation>
    <scope>NUCLEOTIDE SEQUENCE [LARGE SCALE MRNA] OF 400-1119</scope>
</reference>
<protein>
    <recommendedName>
        <fullName>Leucine-rich repeats and immunoglobulin-like domains protein 3</fullName>
        <shortName>LIG-3</shortName>
    </recommendedName>
</protein>
<dbReference type="EMBL" id="AY505340">
    <property type="protein sequence ID" value="AAR98629.1"/>
    <property type="molecule type" value="mRNA"/>
</dbReference>
<dbReference type="EMBL" id="AY358288">
    <property type="protein sequence ID" value="AAQ88655.1"/>
    <property type="molecule type" value="mRNA"/>
</dbReference>
<dbReference type="EMBL" id="AY358295">
    <property type="protein sequence ID" value="AAQ88662.1"/>
    <property type="molecule type" value="mRNA"/>
</dbReference>
<dbReference type="EMBL" id="AK074921">
    <property type="protein sequence ID" value="BAC11295.1"/>
    <property type="status" value="ALT_INIT"/>
    <property type="molecule type" value="mRNA"/>
</dbReference>
<dbReference type="CCDS" id="CCDS44933.1">
    <molecule id="Q6UXM1-2"/>
</dbReference>
<dbReference type="CCDS" id="CCDS8960.1">
    <molecule id="Q6UXM1-1"/>
</dbReference>
<dbReference type="RefSeq" id="NP_001129523.1">
    <molecule id="Q6UXM1-2"/>
    <property type="nucleotide sequence ID" value="NM_001136051.3"/>
</dbReference>
<dbReference type="RefSeq" id="NP_700356.2">
    <molecule id="Q6UXM1-1"/>
    <property type="nucleotide sequence ID" value="NM_153377.4"/>
</dbReference>
<dbReference type="SMR" id="Q6UXM1"/>
<dbReference type="BioGRID" id="125712">
    <property type="interactions" value="57"/>
</dbReference>
<dbReference type="FunCoup" id="Q6UXM1">
    <property type="interactions" value="296"/>
</dbReference>
<dbReference type="IntAct" id="Q6UXM1">
    <property type="interactions" value="26"/>
</dbReference>
<dbReference type="STRING" id="9606.ENSP00000326759"/>
<dbReference type="GlyCosmos" id="Q6UXM1">
    <property type="glycosylation" value="12 sites, No reported glycans"/>
</dbReference>
<dbReference type="GlyGen" id="Q6UXM1">
    <property type="glycosylation" value="13 sites, 2 N-linked glycans (2 sites), 1 O-linked glycan (1 site)"/>
</dbReference>
<dbReference type="iPTMnet" id="Q6UXM1"/>
<dbReference type="PhosphoSitePlus" id="Q6UXM1"/>
<dbReference type="BioMuta" id="LRIG3"/>
<dbReference type="DMDM" id="73621176"/>
<dbReference type="jPOST" id="Q6UXM1"/>
<dbReference type="MassIVE" id="Q6UXM1"/>
<dbReference type="PaxDb" id="9606-ENSP00000326759"/>
<dbReference type="PeptideAtlas" id="Q6UXM1"/>
<dbReference type="ProteomicsDB" id="67636">
    <molecule id="Q6UXM1-1"/>
</dbReference>
<dbReference type="ProteomicsDB" id="67637">
    <molecule id="Q6UXM1-2"/>
</dbReference>
<dbReference type="Antibodypedia" id="2484">
    <property type="antibodies" value="143 antibodies from 25 providers"/>
</dbReference>
<dbReference type="DNASU" id="121227"/>
<dbReference type="Ensembl" id="ENST00000320743.8">
    <molecule id="Q6UXM1-1"/>
    <property type="protein sequence ID" value="ENSP00000326759.3"/>
    <property type="gene ID" value="ENSG00000139263.12"/>
</dbReference>
<dbReference type="Ensembl" id="ENST00000379141.8">
    <molecule id="Q6UXM1-2"/>
    <property type="protein sequence ID" value="ENSP00000368436.4"/>
    <property type="gene ID" value="ENSG00000139263.12"/>
</dbReference>
<dbReference type="GeneID" id="121227"/>
<dbReference type="KEGG" id="hsa:121227"/>
<dbReference type="MANE-Select" id="ENST00000320743.8">
    <property type="protein sequence ID" value="ENSP00000326759.3"/>
    <property type="RefSeq nucleotide sequence ID" value="NM_153377.5"/>
    <property type="RefSeq protein sequence ID" value="NP_700356.2"/>
</dbReference>
<dbReference type="UCSC" id="uc001sqr.5">
    <molecule id="Q6UXM1-1"/>
    <property type="organism name" value="human"/>
</dbReference>
<dbReference type="AGR" id="HGNC:30991"/>
<dbReference type="CTD" id="121227"/>
<dbReference type="DisGeNET" id="121227"/>
<dbReference type="GeneCards" id="LRIG3"/>
<dbReference type="HGNC" id="HGNC:30991">
    <property type="gene designation" value="LRIG3"/>
</dbReference>
<dbReference type="HPA" id="ENSG00000139263">
    <property type="expression patterns" value="Low tissue specificity"/>
</dbReference>
<dbReference type="MIM" id="608870">
    <property type="type" value="gene"/>
</dbReference>
<dbReference type="neXtProt" id="NX_Q6UXM1"/>
<dbReference type="OpenTargets" id="ENSG00000139263"/>
<dbReference type="PharmGKB" id="PA134864136"/>
<dbReference type="VEuPathDB" id="HostDB:ENSG00000139263"/>
<dbReference type="eggNOG" id="KOG0619">
    <property type="taxonomic scope" value="Eukaryota"/>
</dbReference>
<dbReference type="eggNOG" id="KOG4194">
    <property type="taxonomic scope" value="Eukaryota"/>
</dbReference>
<dbReference type="GeneTree" id="ENSGT00940000157098"/>
<dbReference type="InParanoid" id="Q6UXM1"/>
<dbReference type="OMA" id="WIIEDQS"/>
<dbReference type="OrthoDB" id="5917255at2759"/>
<dbReference type="PAN-GO" id="Q6UXM1">
    <property type="GO annotations" value="2 GO annotations based on evolutionary models"/>
</dbReference>
<dbReference type="PhylomeDB" id="Q6UXM1"/>
<dbReference type="TreeFam" id="TF325380"/>
<dbReference type="PathwayCommons" id="Q6UXM1"/>
<dbReference type="SignaLink" id="Q6UXM1"/>
<dbReference type="SIGNOR" id="Q6UXM1"/>
<dbReference type="BioGRID-ORCS" id="121227">
    <property type="hits" value="11 hits in 1151 CRISPR screens"/>
</dbReference>
<dbReference type="ChiTaRS" id="LRIG3">
    <property type="organism name" value="human"/>
</dbReference>
<dbReference type="GenomeRNAi" id="121227"/>
<dbReference type="Pharos" id="Q6UXM1">
    <property type="development level" value="Tbio"/>
</dbReference>
<dbReference type="PRO" id="PR:Q6UXM1"/>
<dbReference type="Proteomes" id="UP000005640">
    <property type="component" value="Chromosome 12"/>
</dbReference>
<dbReference type="RNAct" id="Q6UXM1">
    <property type="molecule type" value="protein"/>
</dbReference>
<dbReference type="Bgee" id="ENSG00000139263">
    <property type="expression patterns" value="Expressed in calcaneal tendon and 149 other cell types or tissues"/>
</dbReference>
<dbReference type="ExpressionAtlas" id="Q6UXM1">
    <property type="expression patterns" value="baseline and differential"/>
</dbReference>
<dbReference type="GO" id="GO:0030659">
    <property type="term" value="C:cytoplasmic vesicle membrane"/>
    <property type="evidence" value="ECO:0007669"/>
    <property type="project" value="UniProtKB-SubCell"/>
</dbReference>
<dbReference type="GO" id="GO:0031012">
    <property type="term" value="C:extracellular matrix"/>
    <property type="evidence" value="ECO:0000318"/>
    <property type="project" value="GO_Central"/>
</dbReference>
<dbReference type="GO" id="GO:0005615">
    <property type="term" value="C:extracellular space"/>
    <property type="evidence" value="ECO:0007005"/>
    <property type="project" value="UniProtKB"/>
</dbReference>
<dbReference type="GO" id="GO:0005886">
    <property type="term" value="C:plasma membrane"/>
    <property type="evidence" value="ECO:0007669"/>
    <property type="project" value="UniProtKB-SubCell"/>
</dbReference>
<dbReference type="GO" id="GO:0032474">
    <property type="term" value="P:otolith morphogenesis"/>
    <property type="evidence" value="ECO:0007669"/>
    <property type="project" value="Ensembl"/>
</dbReference>
<dbReference type="CDD" id="cd05763">
    <property type="entry name" value="IgI_LRIG1-like"/>
    <property type="match status" value="1"/>
</dbReference>
<dbReference type="FunFam" id="2.60.40.10:FF:000161">
    <property type="entry name" value="Leucine rich repeats and immunoglobulin like domains 2"/>
    <property type="match status" value="1"/>
</dbReference>
<dbReference type="FunFam" id="3.80.10.10:FF:000040">
    <property type="entry name" value="Leucine rich repeats and immunoglobulin like domains 2"/>
    <property type="match status" value="1"/>
</dbReference>
<dbReference type="FunFam" id="2.60.40.10:FF:000150">
    <property type="entry name" value="Leucine rich repeats and immunoglobulin like domains 3"/>
    <property type="match status" value="1"/>
</dbReference>
<dbReference type="FunFam" id="2.60.40.10:FF:000224">
    <property type="entry name" value="Leucine rich repeats and immunoglobulin like domains 3"/>
    <property type="match status" value="1"/>
</dbReference>
<dbReference type="FunFam" id="3.80.10.10:FF:000023">
    <property type="entry name" value="Leucine rich repeats and immunoglobulin like domains 3"/>
    <property type="match status" value="1"/>
</dbReference>
<dbReference type="Gene3D" id="2.60.40.10">
    <property type="entry name" value="Immunoglobulins"/>
    <property type="match status" value="3"/>
</dbReference>
<dbReference type="Gene3D" id="3.80.10.10">
    <property type="entry name" value="Ribonuclease Inhibitor"/>
    <property type="match status" value="2"/>
</dbReference>
<dbReference type="InterPro" id="IPR000483">
    <property type="entry name" value="Cys-rich_flank_reg_C"/>
</dbReference>
<dbReference type="InterPro" id="IPR007110">
    <property type="entry name" value="Ig-like_dom"/>
</dbReference>
<dbReference type="InterPro" id="IPR036179">
    <property type="entry name" value="Ig-like_dom_sf"/>
</dbReference>
<dbReference type="InterPro" id="IPR013783">
    <property type="entry name" value="Ig-like_fold"/>
</dbReference>
<dbReference type="InterPro" id="IPR013098">
    <property type="entry name" value="Ig_I-set"/>
</dbReference>
<dbReference type="InterPro" id="IPR003599">
    <property type="entry name" value="Ig_sub"/>
</dbReference>
<dbReference type="InterPro" id="IPR003598">
    <property type="entry name" value="Ig_sub2"/>
</dbReference>
<dbReference type="InterPro" id="IPR001611">
    <property type="entry name" value="Leu-rich_rpt"/>
</dbReference>
<dbReference type="InterPro" id="IPR003591">
    <property type="entry name" value="Leu-rich_rpt_typical-subtyp"/>
</dbReference>
<dbReference type="InterPro" id="IPR050467">
    <property type="entry name" value="LRFN"/>
</dbReference>
<dbReference type="InterPro" id="IPR032675">
    <property type="entry name" value="LRR_dom_sf"/>
</dbReference>
<dbReference type="PANTHER" id="PTHR45842:SF12">
    <property type="entry name" value="KEKKON 5, ISOFORM A"/>
    <property type="match status" value="1"/>
</dbReference>
<dbReference type="PANTHER" id="PTHR45842">
    <property type="entry name" value="SYNAPTIC ADHESION-LIKE MOLECULE SALM"/>
    <property type="match status" value="1"/>
</dbReference>
<dbReference type="Pfam" id="PF07679">
    <property type="entry name" value="I-set"/>
    <property type="match status" value="2"/>
</dbReference>
<dbReference type="Pfam" id="PF13927">
    <property type="entry name" value="Ig_3"/>
    <property type="match status" value="1"/>
</dbReference>
<dbReference type="Pfam" id="PF00560">
    <property type="entry name" value="LRR_1"/>
    <property type="match status" value="1"/>
</dbReference>
<dbReference type="Pfam" id="PF13855">
    <property type="entry name" value="LRR_8"/>
    <property type="match status" value="3"/>
</dbReference>
<dbReference type="SMART" id="SM00409">
    <property type="entry name" value="IG"/>
    <property type="match status" value="3"/>
</dbReference>
<dbReference type="SMART" id="SM00408">
    <property type="entry name" value="IGc2"/>
    <property type="match status" value="3"/>
</dbReference>
<dbReference type="SMART" id="SM00365">
    <property type="entry name" value="LRR_SD22"/>
    <property type="match status" value="7"/>
</dbReference>
<dbReference type="SMART" id="SM00369">
    <property type="entry name" value="LRR_TYP"/>
    <property type="match status" value="14"/>
</dbReference>
<dbReference type="SMART" id="SM00082">
    <property type="entry name" value="LRRCT"/>
    <property type="match status" value="1"/>
</dbReference>
<dbReference type="SUPFAM" id="SSF48726">
    <property type="entry name" value="Immunoglobulin"/>
    <property type="match status" value="3"/>
</dbReference>
<dbReference type="SUPFAM" id="SSF52058">
    <property type="entry name" value="L domain-like"/>
    <property type="match status" value="1"/>
</dbReference>
<dbReference type="SUPFAM" id="SSF52047">
    <property type="entry name" value="RNI-like"/>
    <property type="match status" value="1"/>
</dbReference>
<dbReference type="PROSITE" id="PS50835">
    <property type="entry name" value="IG_LIKE"/>
    <property type="match status" value="3"/>
</dbReference>
<dbReference type="PROSITE" id="PS51450">
    <property type="entry name" value="LRR"/>
    <property type="match status" value="15"/>
</dbReference>
<comment type="function">
    <text evidence="1">May play a role in craniofacial and inner ear morphogenesis during embryonic development. May act within the otic vesicle epithelium to control formation of the lateral semicircular canal in the inner ear, possibly by restricting the expression of NTN1 (By similarity).</text>
</comment>
<comment type="subunit">
    <text evidence="1">Interacts with EGFR, ERBB2 and ERBB4 (in vitro).</text>
</comment>
<comment type="interaction">
    <interactant intactId="EBI-9207843">
        <id>Q6UXM1</id>
    </interactant>
    <interactant intactId="EBI-2865191">
        <id>Q96JA1</id>
        <label>LRIG1</label>
    </interactant>
    <organismsDiffer>false</organismsDiffer>
    <experiments>9</experiments>
</comment>
<comment type="interaction">
    <interactant intactId="EBI-25412632">
        <id>Q6UXM1-1</id>
    </interactant>
    <interactant intactId="EBI-25412679">
        <id>Q9UPQ0-1</id>
        <label>LIMCH1</label>
    </interactant>
    <organismsDiffer>false</organismsDiffer>
    <experiments>3</experiments>
</comment>
<comment type="interaction">
    <interactant intactId="EBI-25412632">
        <id>Q6UXM1-1</id>
    </interactant>
    <interactant intactId="EBI-4400717">
        <id>Q8WWI1-3</id>
        <label>LMO7</label>
    </interactant>
    <organismsDiffer>false</organismsDiffer>
    <experiments>3</experiments>
</comment>
<comment type="subcellular location">
    <subcellularLocation>
        <location evidence="1">Cell membrane</location>
        <topology evidence="1">Single-pass type I membrane protein</topology>
    </subcellularLocation>
    <subcellularLocation>
        <location evidence="1">Cytoplasmic vesicle membrane</location>
        <topology evidence="1">Single-pass type I membrane protein</topology>
    </subcellularLocation>
    <text evidence="1">Detected in cytoplasmic vesicles when coexpressed with ERBB4.</text>
</comment>
<comment type="alternative products">
    <event type="alternative splicing"/>
    <isoform>
        <id>Q6UXM1-1</id>
        <name>1</name>
        <sequence type="displayed"/>
    </isoform>
    <isoform>
        <id>Q6UXM1-2</id>
        <name>2</name>
        <sequence type="described" ref="VSP_015097"/>
    </isoform>
</comment>
<comment type="tissue specificity">
    <text evidence="5">Widely expressed.</text>
</comment>
<comment type="sequence caution" evidence="7">
    <conflict type="erroneous initiation">
        <sequence resource="EMBL-CDS" id="BAC11295"/>
    </conflict>
    <text>Truncated N-terminus.</text>
</comment>
<accession>Q6UXM1</accession>
<accession>Q6UXL7</accession>
<accession>Q8NC72</accession>
<gene>
    <name type="primary">LRIG3</name>
    <name type="synonym">LIG3</name>
    <name type="ORF">UNQ287/PRO326/PRO335</name>
</gene>
<name>LRIG3_HUMAN</name>
<feature type="signal peptide" evidence="2">
    <location>
        <begin position="1"/>
        <end position="24"/>
    </location>
</feature>
<feature type="chain" id="PRO_0000014831" description="Leucine-rich repeats and immunoglobulin-like domains protein 3">
    <location>
        <begin position="25"/>
        <end position="1119"/>
    </location>
</feature>
<feature type="transmembrane region" description="Helical" evidence="2">
    <location>
        <begin position="810"/>
        <end position="830"/>
    </location>
</feature>
<feature type="domain" description="LRRNT">
    <location>
        <begin position="38"/>
        <end position="74"/>
    </location>
</feature>
<feature type="repeat" description="LRR 1">
    <location>
        <begin position="75"/>
        <end position="96"/>
    </location>
</feature>
<feature type="repeat" description="LRR 2">
    <location>
        <begin position="99"/>
        <end position="120"/>
    </location>
</feature>
<feature type="repeat" description="LRR 3">
    <location>
        <begin position="122"/>
        <end position="142"/>
    </location>
</feature>
<feature type="repeat" description="LRR 4">
    <location>
        <begin position="146"/>
        <end position="167"/>
    </location>
</feature>
<feature type="repeat" description="LRR 5">
    <location>
        <begin position="168"/>
        <end position="189"/>
    </location>
</feature>
<feature type="repeat" description="LRR 6">
    <location>
        <begin position="193"/>
        <end position="214"/>
    </location>
</feature>
<feature type="repeat" description="LRR 7">
    <location>
        <begin position="216"/>
        <end position="237"/>
    </location>
</feature>
<feature type="repeat" description="LRR 8">
    <location>
        <begin position="240"/>
        <end position="261"/>
    </location>
</feature>
<feature type="repeat" description="LRR 9">
    <location>
        <begin position="264"/>
        <end position="285"/>
    </location>
</feature>
<feature type="repeat" description="LRR 10">
    <location>
        <begin position="288"/>
        <end position="309"/>
    </location>
</feature>
<feature type="repeat" description="LRR 11">
    <location>
        <begin position="312"/>
        <end position="333"/>
    </location>
</feature>
<feature type="repeat" description="LRR 12">
    <location>
        <begin position="336"/>
        <end position="357"/>
    </location>
</feature>
<feature type="repeat" description="LRR 13">
    <location>
        <begin position="360"/>
        <end position="382"/>
    </location>
</feature>
<feature type="repeat" description="LRR 14">
    <location>
        <begin position="387"/>
        <end position="408"/>
    </location>
</feature>
<feature type="repeat" description="LRR 15">
    <location>
        <begin position="411"/>
        <end position="432"/>
    </location>
</feature>
<feature type="domain" description="LRRCT">
    <location>
        <begin position="444"/>
        <end position="495"/>
    </location>
</feature>
<feature type="domain" description="Ig-like C2-type 1">
    <location>
        <begin position="499"/>
        <end position="598"/>
    </location>
</feature>
<feature type="domain" description="Ig-like C2-type 2">
    <location>
        <begin position="603"/>
        <end position="692"/>
    </location>
</feature>
<feature type="domain" description="Ig-like C2-type 3">
    <location>
        <begin position="697"/>
        <end position="783"/>
    </location>
</feature>
<feature type="region of interest" description="Disordered" evidence="4">
    <location>
        <begin position="1073"/>
        <end position="1093"/>
    </location>
</feature>
<feature type="compositionally biased region" description="Basic and acidic residues" evidence="4">
    <location>
        <begin position="1083"/>
        <end position="1093"/>
    </location>
</feature>
<feature type="glycosylation site" description="N-linked (GlcNAc...) asparagine" evidence="2">
    <location>
        <position position="122"/>
    </location>
</feature>
<feature type="glycosylation site" description="N-linked (GlcNAc...) asparagine" evidence="2">
    <location>
        <position position="156"/>
    </location>
</feature>
<feature type="glycosylation site" description="N-linked (GlcNAc...) asparagine" evidence="2">
    <location>
        <position position="274"/>
    </location>
</feature>
<feature type="glycosylation site" description="N-linked (GlcNAc...) asparagine" evidence="2">
    <location>
        <position position="442"/>
    </location>
</feature>
<feature type="glycosylation site" description="N-linked (GlcNAc...) asparagine" evidence="2">
    <location>
        <position position="469"/>
    </location>
</feature>
<feature type="glycosylation site" description="N-linked (GlcNAc...) asparagine" evidence="2">
    <location>
        <position position="515"/>
    </location>
</feature>
<feature type="glycosylation site" description="N-linked (GlcNAc...) asparagine" evidence="2">
    <location>
        <position position="688"/>
    </location>
</feature>
<feature type="glycosylation site" description="N-linked (GlcNAc...) asparagine" evidence="2">
    <location>
        <position position="729"/>
    </location>
</feature>
<feature type="glycosylation site" description="N-linked (GlcNAc...) asparagine" evidence="2">
    <location>
        <position position="905"/>
    </location>
</feature>
<feature type="glycosylation site" description="N-linked (GlcNAc...) asparagine" evidence="2">
    <location>
        <position position="987"/>
    </location>
</feature>
<feature type="glycosylation site" description="N-linked (GlcNAc...) asparagine" evidence="2">
    <location>
        <position position="999"/>
    </location>
</feature>
<feature type="glycosylation site" description="N-linked (GlcNAc...) asparagine" evidence="2">
    <location>
        <position position="1016"/>
    </location>
</feature>
<feature type="disulfide bond" evidence="3">
    <location>
        <begin position="520"/>
        <end position="581"/>
    </location>
</feature>
<feature type="disulfide bond" evidence="3">
    <location>
        <begin position="624"/>
        <end position="676"/>
    </location>
</feature>
<feature type="disulfide bond" evidence="3">
    <location>
        <begin position="718"/>
        <end position="767"/>
    </location>
</feature>
<feature type="splice variant" id="VSP_015097" description="In isoform 2." evidence="6">
    <original>MSAPSLRARAAGLGLLLCAVLGRAGRSDSGGRGELGQPSGVAAERPCPTTCRCLGDLLDCSRKRLARLPEPLPSWVARL</original>
    <variation>MVDVLLLFSLCLLFHISRP</variation>
    <location>
        <begin position="1"/>
        <end position="79"/>
    </location>
</feature>
<keyword id="KW-0025">Alternative splicing</keyword>
<keyword id="KW-1003">Cell membrane</keyword>
<keyword id="KW-0968">Cytoplasmic vesicle</keyword>
<keyword id="KW-0217">Developmental protein</keyword>
<keyword id="KW-1015">Disulfide bond</keyword>
<keyword id="KW-0325">Glycoprotein</keyword>
<keyword id="KW-0393">Immunoglobulin domain</keyword>
<keyword id="KW-0433">Leucine-rich repeat</keyword>
<keyword id="KW-0472">Membrane</keyword>
<keyword id="KW-1267">Proteomics identification</keyword>
<keyword id="KW-1185">Reference proteome</keyword>
<keyword id="KW-0677">Repeat</keyword>
<keyword id="KW-0732">Signal</keyword>
<keyword id="KW-0812">Transmembrane</keyword>
<keyword id="KW-1133">Transmembrane helix</keyword>
<sequence length="1119" mass="123434">MSAPSLRARAAGLGLLLCAVLGRAGRSDSGGRGELGQPSGVAAERPCPTTCRCLGDLLDCSRKRLARLPEPLPSWVARLDLSHNRLSFIKASSMSHLQSLREVKLNNNELETIPNLGPVSANITLLSLAGNRIVEILPEHLKEFQSLETLDLSSNNISELQTAFPALQLKYLYLNSNRVTSMEPGYFDNLANTLLVLKLNRNRISAIPPKMFKLPQLQHLELNRNKIKNVDGLTFQGLGALKSLKMQRNGVTKLMDGAFWGLSNMEILQLDHNNLTEITKGWLYGLLMLQELHLSQNAINRISPDAWEFCQKLSELDLTFNHLSRLDDSSFLGLSLLNTLHIGNNRVSYIADCAFRGLSSLKTLDLKNNEISWTIEDMNGAFSGLDKLRRLILQGNRIRSITKKAFTGLDALEHLDLSDNAIMSLQGNAFSQMKKLQQLHLNTSSLLCDCQLKWLPQWVAENNFQSFVNASCAHPQLLKGRSIFAVSPDGFVCDDFPKPQITVQPETQSAIKGSNLSFICSAASSSDSPMTFAWKKDNELLHDAEMENYAHLRAQGGEVMEYTTILRLREVEFASEGKYQCVISNHFGSSYSVKAKLTVNMLPSFTKTPMDLTIRAGAMARLECAAVGHPAPQIAWQKDGGTDFPAARERRMHVMPEDDVFFIVDVKIEDIGVYSCTAQNSAGSISANATLTVLETPSFLRPLLDRTVTKGETAVLQCIAGGSPPPKLNWTKDDSPLVVTERHFFAAGNQLLIIVDSDVSDAGKYTCEMSNTLGTERGNVRLSVIPTPTCDSPQMTAPSLDDDGWATVGVVIIAVVCCVVGTSLVWVVIIYHTRRRNEDCSITNTDETNLPADIPSYLSSQGTLADRQDGYVSSESGSHHQFVTSSGAGFFLPQHDSSGTCHIDNSSEADVEAATDLFLCPFLGSTGPMYLKGNVYGSDPFETYHTGCSPDPRTVLMDHYEPSYIKKKECYPCSHPSEESCERSFSNISWPSHVRKLLNTSYSHNEGPGMKNLCLNKSSLDFSANPEPASVASSNSFMGTFGKALRRPHLDAYSSFGQPSDCQPRAFYLKAHSSPDLDSGSEEDGKERTDFQEENHICTFKQTLENYRTPNFQSYDLDT</sequence>
<proteinExistence type="evidence at protein level"/>